<protein>
    <recommendedName>
        <fullName evidence="1">UDP-N-acetylglucosamine--N-acetylmuramyl-(pentapeptide) pyrophosphoryl-undecaprenol N-acetylglucosamine transferase</fullName>
        <ecNumber evidence="1">2.4.1.227</ecNumber>
    </recommendedName>
    <alternativeName>
        <fullName evidence="1">Undecaprenyl-PP-MurNAc-pentapeptide-UDPGlcNAc GlcNAc transferase</fullName>
    </alternativeName>
</protein>
<reference key="1">
    <citation type="journal article" date="2002" name="Proc. Natl. Acad. Sci. U.S.A.">
        <title>The complete genome sequence of Chlorobium tepidum TLS, a photosynthetic, anaerobic, green-sulfur bacterium.</title>
        <authorList>
            <person name="Eisen J.A."/>
            <person name="Nelson K.E."/>
            <person name="Paulsen I.T."/>
            <person name="Heidelberg J.F."/>
            <person name="Wu M."/>
            <person name="Dodson R.J."/>
            <person name="DeBoy R.T."/>
            <person name="Gwinn M.L."/>
            <person name="Nelson W.C."/>
            <person name="Haft D.H."/>
            <person name="Hickey E.K."/>
            <person name="Peterson J.D."/>
            <person name="Durkin A.S."/>
            <person name="Kolonay J.F."/>
            <person name="Yang F."/>
            <person name="Holt I.E."/>
            <person name="Umayam L.A."/>
            <person name="Mason T.M."/>
            <person name="Brenner M."/>
            <person name="Shea T.P."/>
            <person name="Parksey D.S."/>
            <person name="Nierman W.C."/>
            <person name="Feldblyum T.V."/>
            <person name="Hansen C.L."/>
            <person name="Craven M.B."/>
            <person name="Radune D."/>
            <person name="Vamathevan J.J."/>
            <person name="Khouri H.M."/>
            <person name="White O."/>
            <person name="Gruber T.M."/>
            <person name="Ketchum K.A."/>
            <person name="Venter J.C."/>
            <person name="Tettelin H."/>
            <person name="Bryant D.A."/>
            <person name="Fraser C.M."/>
        </authorList>
    </citation>
    <scope>NUCLEOTIDE SEQUENCE [LARGE SCALE GENOMIC DNA]</scope>
    <source>
        <strain>ATCC 49652 / DSM 12025 / NBRC 103806 / TLS</strain>
    </source>
</reference>
<organism>
    <name type="scientific">Chlorobaculum tepidum (strain ATCC 49652 / DSM 12025 / NBRC 103806 / TLS)</name>
    <name type="common">Chlorobium tepidum</name>
    <dbReference type="NCBI Taxonomy" id="194439"/>
    <lineage>
        <taxon>Bacteria</taxon>
        <taxon>Pseudomonadati</taxon>
        <taxon>Chlorobiota</taxon>
        <taxon>Chlorobiia</taxon>
        <taxon>Chlorobiales</taxon>
        <taxon>Chlorobiaceae</taxon>
        <taxon>Chlorobaculum</taxon>
    </lineage>
</organism>
<sequence length="364" mass="38709">MKVLFAGGGTGGHLYPGVAMAAELKKRVPGISISFAGTSAGIEATEVPRLGYRLVLFPVRGLKRGLSIRALVENALILGDFAKSLSMAMALVRKEQPDVVVGTGGYVSAPLLLAAQLSGKKTLIQEQNAFPGVTTRLLARMATEVHLSFEESRKFFGGKSEVFVTGNPAREFPAESRESCLDFFGLDRSLPTLLVFGGSRGARAINNAVLKLCHRLEGTVNLIWQTGALDADRMRGEIGTSATRWIGPYIQEMGKAYGAADLVLCRAGASSLAELTNLGKPSVLIPYPYAAADHQRHNAMALVSAGASVMIDDSKIGEEASFDVILTLLRDREKLAQMGEAARREGHPGAAATLAERIIALSKS</sequence>
<accession>Q8KGD4</accession>
<feature type="chain" id="PRO_0000109162" description="UDP-N-acetylglucosamine--N-acetylmuramyl-(pentapeptide) pyrophosphoryl-undecaprenol N-acetylglucosamine transferase">
    <location>
        <begin position="1"/>
        <end position="364"/>
    </location>
</feature>
<feature type="binding site" evidence="1">
    <location>
        <begin position="10"/>
        <end position="12"/>
    </location>
    <ligand>
        <name>UDP-N-acetyl-alpha-D-glucosamine</name>
        <dbReference type="ChEBI" id="CHEBI:57705"/>
    </ligand>
</feature>
<feature type="binding site" evidence="1">
    <location>
        <position position="128"/>
    </location>
    <ligand>
        <name>UDP-N-acetyl-alpha-D-glucosamine</name>
        <dbReference type="ChEBI" id="CHEBI:57705"/>
    </ligand>
</feature>
<feature type="binding site" evidence="1">
    <location>
        <position position="170"/>
    </location>
    <ligand>
        <name>UDP-N-acetyl-alpha-D-glucosamine</name>
        <dbReference type="ChEBI" id="CHEBI:57705"/>
    </ligand>
</feature>
<feature type="binding site" evidence="1">
    <location>
        <position position="199"/>
    </location>
    <ligand>
        <name>UDP-N-acetyl-alpha-D-glucosamine</name>
        <dbReference type="ChEBI" id="CHEBI:57705"/>
    </ligand>
</feature>
<feature type="binding site" evidence="1">
    <location>
        <position position="250"/>
    </location>
    <ligand>
        <name>UDP-N-acetyl-alpha-D-glucosamine</name>
        <dbReference type="ChEBI" id="CHEBI:57705"/>
    </ligand>
</feature>
<feature type="binding site" evidence="1">
    <location>
        <position position="295"/>
    </location>
    <ligand>
        <name>UDP-N-acetyl-alpha-D-glucosamine</name>
        <dbReference type="ChEBI" id="CHEBI:57705"/>
    </ligand>
</feature>
<keyword id="KW-0131">Cell cycle</keyword>
<keyword id="KW-0132">Cell division</keyword>
<keyword id="KW-0997">Cell inner membrane</keyword>
<keyword id="KW-1003">Cell membrane</keyword>
<keyword id="KW-0133">Cell shape</keyword>
<keyword id="KW-0961">Cell wall biogenesis/degradation</keyword>
<keyword id="KW-0328">Glycosyltransferase</keyword>
<keyword id="KW-0472">Membrane</keyword>
<keyword id="KW-0573">Peptidoglycan synthesis</keyword>
<keyword id="KW-1185">Reference proteome</keyword>
<keyword id="KW-0808">Transferase</keyword>
<gene>
    <name evidence="1" type="primary">murG</name>
    <name type="ordered locus">CT0034</name>
</gene>
<name>MURG_CHLTE</name>
<comment type="function">
    <text evidence="1">Cell wall formation. Catalyzes the transfer of a GlcNAc subunit on undecaprenyl-pyrophosphoryl-MurNAc-pentapeptide (lipid intermediate I) to form undecaprenyl-pyrophosphoryl-MurNAc-(pentapeptide)GlcNAc (lipid intermediate II).</text>
</comment>
<comment type="catalytic activity">
    <reaction evidence="1">
        <text>di-trans,octa-cis-undecaprenyl diphospho-N-acetyl-alpha-D-muramoyl-L-alanyl-D-glutamyl-meso-2,6-diaminopimeloyl-D-alanyl-D-alanine + UDP-N-acetyl-alpha-D-glucosamine = di-trans,octa-cis-undecaprenyl diphospho-[N-acetyl-alpha-D-glucosaminyl-(1-&gt;4)]-N-acetyl-alpha-D-muramoyl-L-alanyl-D-glutamyl-meso-2,6-diaminopimeloyl-D-alanyl-D-alanine + UDP + H(+)</text>
        <dbReference type="Rhea" id="RHEA:31227"/>
        <dbReference type="ChEBI" id="CHEBI:15378"/>
        <dbReference type="ChEBI" id="CHEBI:57705"/>
        <dbReference type="ChEBI" id="CHEBI:58223"/>
        <dbReference type="ChEBI" id="CHEBI:61387"/>
        <dbReference type="ChEBI" id="CHEBI:61388"/>
        <dbReference type="EC" id="2.4.1.227"/>
    </reaction>
</comment>
<comment type="pathway">
    <text evidence="1">Cell wall biogenesis; peptidoglycan biosynthesis.</text>
</comment>
<comment type="subcellular location">
    <subcellularLocation>
        <location evidence="1">Cell inner membrane</location>
        <topology evidence="1">Peripheral membrane protein</topology>
        <orientation evidence="1">Cytoplasmic side</orientation>
    </subcellularLocation>
</comment>
<comment type="similarity">
    <text evidence="1">Belongs to the glycosyltransferase 28 family. MurG subfamily.</text>
</comment>
<proteinExistence type="inferred from homology"/>
<dbReference type="EC" id="2.4.1.227" evidence="1"/>
<dbReference type="EMBL" id="AE006470">
    <property type="protein sequence ID" value="AAM71282.1"/>
    <property type="molecule type" value="Genomic_DNA"/>
</dbReference>
<dbReference type="RefSeq" id="NP_660940.1">
    <property type="nucleotide sequence ID" value="NC_002932.3"/>
</dbReference>
<dbReference type="RefSeq" id="WP_010931728.1">
    <property type="nucleotide sequence ID" value="NC_002932.3"/>
</dbReference>
<dbReference type="SMR" id="Q8KGD4"/>
<dbReference type="STRING" id="194439.CT0034"/>
<dbReference type="CAZy" id="GT28">
    <property type="family name" value="Glycosyltransferase Family 28"/>
</dbReference>
<dbReference type="EnsemblBacteria" id="AAM71282">
    <property type="protein sequence ID" value="AAM71282"/>
    <property type="gene ID" value="CT0034"/>
</dbReference>
<dbReference type="KEGG" id="cte:CT0034"/>
<dbReference type="PATRIC" id="fig|194439.7.peg.33"/>
<dbReference type="eggNOG" id="COG0707">
    <property type="taxonomic scope" value="Bacteria"/>
</dbReference>
<dbReference type="HOGENOM" id="CLU_037404_0_1_10"/>
<dbReference type="OrthoDB" id="9808936at2"/>
<dbReference type="UniPathway" id="UPA00219"/>
<dbReference type="Proteomes" id="UP000001007">
    <property type="component" value="Chromosome"/>
</dbReference>
<dbReference type="GO" id="GO:0005886">
    <property type="term" value="C:plasma membrane"/>
    <property type="evidence" value="ECO:0007669"/>
    <property type="project" value="UniProtKB-SubCell"/>
</dbReference>
<dbReference type="GO" id="GO:0051991">
    <property type="term" value="F:UDP-N-acetyl-D-glucosamine:N-acetylmuramoyl-L-alanyl-D-glutamyl-meso-2,6-diaminopimelyl-D-alanyl-D-alanine-diphosphoundecaprenol 4-beta-N-acetylglucosaminlytransferase activity"/>
    <property type="evidence" value="ECO:0007669"/>
    <property type="project" value="RHEA"/>
</dbReference>
<dbReference type="GO" id="GO:0050511">
    <property type="term" value="F:undecaprenyldiphospho-muramoylpentapeptide beta-N-acetylglucosaminyltransferase activity"/>
    <property type="evidence" value="ECO:0007669"/>
    <property type="project" value="UniProtKB-UniRule"/>
</dbReference>
<dbReference type="GO" id="GO:0005975">
    <property type="term" value="P:carbohydrate metabolic process"/>
    <property type="evidence" value="ECO:0007669"/>
    <property type="project" value="InterPro"/>
</dbReference>
<dbReference type="GO" id="GO:0051301">
    <property type="term" value="P:cell division"/>
    <property type="evidence" value="ECO:0007669"/>
    <property type="project" value="UniProtKB-KW"/>
</dbReference>
<dbReference type="GO" id="GO:0071555">
    <property type="term" value="P:cell wall organization"/>
    <property type="evidence" value="ECO:0007669"/>
    <property type="project" value="UniProtKB-KW"/>
</dbReference>
<dbReference type="GO" id="GO:0030259">
    <property type="term" value="P:lipid glycosylation"/>
    <property type="evidence" value="ECO:0007669"/>
    <property type="project" value="UniProtKB-UniRule"/>
</dbReference>
<dbReference type="GO" id="GO:0009252">
    <property type="term" value="P:peptidoglycan biosynthetic process"/>
    <property type="evidence" value="ECO:0007669"/>
    <property type="project" value="UniProtKB-UniRule"/>
</dbReference>
<dbReference type="GO" id="GO:0008360">
    <property type="term" value="P:regulation of cell shape"/>
    <property type="evidence" value="ECO:0007669"/>
    <property type="project" value="UniProtKB-KW"/>
</dbReference>
<dbReference type="CDD" id="cd03785">
    <property type="entry name" value="GT28_MurG"/>
    <property type="match status" value="1"/>
</dbReference>
<dbReference type="Gene3D" id="3.40.50.2000">
    <property type="entry name" value="Glycogen Phosphorylase B"/>
    <property type="match status" value="2"/>
</dbReference>
<dbReference type="HAMAP" id="MF_00033">
    <property type="entry name" value="MurG"/>
    <property type="match status" value="1"/>
</dbReference>
<dbReference type="InterPro" id="IPR006009">
    <property type="entry name" value="GlcNAc_MurG"/>
</dbReference>
<dbReference type="InterPro" id="IPR007235">
    <property type="entry name" value="Glyco_trans_28_C"/>
</dbReference>
<dbReference type="InterPro" id="IPR004276">
    <property type="entry name" value="GlycoTrans_28_N"/>
</dbReference>
<dbReference type="NCBIfam" id="TIGR01133">
    <property type="entry name" value="murG"/>
    <property type="match status" value="1"/>
</dbReference>
<dbReference type="PANTHER" id="PTHR21015:SF22">
    <property type="entry name" value="GLYCOSYLTRANSFERASE"/>
    <property type="match status" value="1"/>
</dbReference>
<dbReference type="PANTHER" id="PTHR21015">
    <property type="entry name" value="UDP-N-ACETYLGLUCOSAMINE--N-ACETYLMURAMYL-(PENTAPEPTIDE) PYROPHOSPHORYL-UNDECAPRENOL N-ACETYLGLUCOSAMINE TRANSFERASE 1"/>
    <property type="match status" value="1"/>
</dbReference>
<dbReference type="Pfam" id="PF04101">
    <property type="entry name" value="Glyco_tran_28_C"/>
    <property type="match status" value="1"/>
</dbReference>
<dbReference type="Pfam" id="PF03033">
    <property type="entry name" value="Glyco_transf_28"/>
    <property type="match status" value="1"/>
</dbReference>
<dbReference type="SUPFAM" id="SSF53756">
    <property type="entry name" value="UDP-Glycosyltransferase/glycogen phosphorylase"/>
    <property type="match status" value="1"/>
</dbReference>
<evidence type="ECO:0000255" key="1">
    <source>
        <dbReference type="HAMAP-Rule" id="MF_00033"/>
    </source>
</evidence>